<protein>
    <recommendedName>
        <fullName evidence="1">Phosphoadenosine 5'-phosphosulfate reductase</fullName>
        <shortName evidence="1">PAPS reductase</shortName>
        <ecNumber evidence="1">1.8.4.8</ecNumber>
    </recommendedName>
    <alternativeName>
        <fullName evidence="1">3'-phosphoadenylylsulfate reductase</fullName>
    </alternativeName>
    <alternativeName>
        <fullName evidence="1">PAPS reductase, thioredoxin dependent</fullName>
    </alternativeName>
    <alternativeName>
        <fullName evidence="1">PAPS sulfotransferase</fullName>
    </alternativeName>
    <alternativeName>
        <fullName evidence="1">PAdoPS reductase</fullName>
    </alternativeName>
</protein>
<gene>
    <name evidence="1" type="primary">cysH</name>
    <name type="ordered locus">SeAg_B3076</name>
</gene>
<proteinExistence type="inferred from homology"/>
<sequence>MSKLDLNALNDLPKVDRVLALAEPNAQLETLTAEERVAWALENLPGEYVLSSSFGIQAAVSLHLVNQIRPDIPVILTDTGYLFPETYQFIDELTDKLKLNLKVYRAGESPAWQEARYGKLWEQGVEGIEKYNEINKVEPMNRALKELKAQTWFAGLRREQSGSRAHLPVLAIQRGVFKVLPIIDWDNRTVYQYLQKHGLKYHPLWDQGYLSVGDTHTTRKWEPGMAEEETRFFGLKRECGLHEG</sequence>
<feature type="chain" id="PRO_1000092179" description="Phosphoadenosine 5'-phosphosulfate reductase">
    <location>
        <begin position="1"/>
        <end position="244"/>
    </location>
</feature>
<feature type="active site" description="Nucleophile; cysteine thiosulfonate intermediate" evidence="1">
    <location>
        <position position="239"/>
    </location>
</feature>
<dbReference type="EC" id="1.8.4.8" evidence="1"/>
<dbReference type="EMBL" id="CP001138">
    <property type="protein sequence ID" value="ACH50005.1"/>
    <property type="molecule type" value="Genomic_DNA"/>
</dbReference>
<dbReference type="RefSeq" id="WP_000039831.1">
    <property type="nucleotide sequence ID" value="NC_011149.1"/>
</dbReference>
<dbReference type="SMR" id="B5F429"/>
<dbReference type="KEGG" id="sea:SeAg_B3076"/>
<dbReference type="HOGENOM" id="CLU_044089_3_0_6"/>
<dbReference type="UniPathway" id="UPA00140">
    <property type="reaction ID" value="UER00206"/>
</dbReference>
<dbReference type="Proteomes" id="UP000008819">
    <property type="component" value="Chromosome"/>
</dbReference>
<dbReference type="GO" id="GO:0005737">
    <property type="term" value="C:cytoplasm"/>
    <property type="evidence" value="ECO:0007669"/>
    <property type="project" value="UniProtKB-SubCell"/>
</dbReference>
<dbReference type="GO" id="GO:0004604">
    <property type="term" value="F:phosphoadenylyl-sulfate reductase (thioredoxin) activity"/>
    <property type="evidence" value="ECO:0007669"/>
    <property type="project" value="UniProtKB-UniRule"/>
</dbReference>
<dbReference type="GO" id="GO:0070814">
    <property type="term" value="P:hydrogen sulfide biosynthetic process"/>
    <property type="evidence" value="ECO:0007669"/>
    <property type="project" value="UniProtKB-UniRule"/>
</dbReference>
<dbReference type="GO" id="GO:0019379">
    <property type="term" value="P:sulfate assimilation, phosphoadenylyl sulfate reduction by phosphoadenylyl-sulfate reductase (thioredoxin)"/>
    <property type="evidence" value="ECO:0007669"/>
    <property type="project" value="UniProtKB-UniRule"/>
</dbReference>
<dbReference type="CDD" id="cd23945">
    <property type="entry name" value="PAPS_reductase"/>
    <property type="match status" value="1"/>
</dbReference>
<dbReference type="FunFam" id="3.40.50.620:FF:000043">
    <property type="entry name" value="Phosphoadenosine phosphosulfate reductase"/>
    <property type="match status" value="1"/>
</dbReference>
<dbReference type="Gene3D" id="3.40.50.620">
    <property type="entry name" value="HUPs"/>
    <property type="match status" value="1"/>
</dbReference>
<dbReference type="HAMAP" id="MF_00063">
    <property type="entry name" value="CysH"/>
    <property type="match status" value="1"/>
</dbReference>
<dbReference type="InterPro" id="IPR004511">
    <property type="entry name" value="PAPS/APS_Rdtase"/>
</dbReference>
<dbReference type="InterPro" id="IPR002500">
    <property type="entry name" value="PAPS_reduct_dom"/>
</dbReference>
<dbReference type="InterPro" id="IPR011800">
    <property type="entry name" value="PAPS_reductase_CysH"/>
</dbReference>
<dbReference type="InterPro" id="IPR014729">
    <property type="entry name" value="Rossmann-like_a/b/a_fold"/>
</dbReference>
<dbReference type="NCBIfam" id="TIGR00434">
    <property type="entry name" value="cysH"/>
    <property type="match status" value="1"/>
</dbReference>
<dbReference type="NCBIfam" id="TIGR02057">
    <property type="entry name" value="PAPS_reductase"/>
    <property type="match status" value="1"/>
</dbReference>
<dbReference type="NCBIfam" id="NF002537">
    <property type="entry name" value="PRK02090.1"/>
    <property type="match status" value="1"/>
</dbReference>
<dbReference type="PANTHER" id="PTHR46509">
    <property type="entry name" value="PHOSPHOADENOSINE PHOSPHOSULFATE REDUCTASE"/>
    <property type="match status" value="1"/>
</dbReference>
<dbReference type="PANTHER" id="PTHR46509:SF1">
    <property type="entry name" value="PHOSPHOADENOSINE PHOSPHOSULFATE REDUCTASE"/>
    <property type="match status" value="1"/>
</dbReference>
<dbReference type="Pfam" id="PF01507">
    <property type="entry name" value="PAPS_reduct"/>
    <property type="match status" value="1"/>
</dbReference>
<dbReference type="PIRSF" id="PIRSF000857">
    <property type="entry name" value="PAPS_reductase"/>
    <property type="match status" value="1"/>
</dbReference>
<dbReference type="SUPFAM" id="SSF52402">
    <property type="entry name" value="Adenine nucleotide alpha hydrolases-like"/>
    <property type="match status" value="1"/>
</dbReference>
<evidence type="ECO:0000255" key="1">
    <source>
        <dbReference type="HAMAP-Rule" id="MF_00063"/>
    </source>
</evidence>
<organism>
    <name type="scientific">Salmonella agona (strain SL483)</name>
    <dbReference type="NCBI Taxonomy" id="454166"/>
    <lineage>
        <taxon>Bacteria</taxon>
        <taxon>Pseudomonadati</taxon>
        <taxon>Pseudomonadota</taxon>
        <taxon>Gammaproteobacteria</taxon>
        <taxon>Enterobacterales</taxon>
        <taxon>Enterobacteriaceae</taxon>
        <taxon>Salmonella</taxon>
    </lineage>
</organism>
<comment type="function">
    <text evidence="1">Catalyzes the formation of sulfite from phosphoadenosine 5'-phosphosulfate (PAPS) using thioredoxin as an electron donor.</text>
</comment>
<comment type="catalytic activity">
    <reaction evidence="1">
        <text>[thioredoxin]-disulfide + sulfite + adenosine 3',5'-bisphosphate + 2 H(+) = [thioredoxin]-dithiol + 3'-phosphoadenylyl sulfate</text>
        <dbReference type="Rhea" id="RHEA:11724"/>
        <dbReference type="Rhea" id="RHEA-COMP:10698"/>
        <dbReference type="Rhea" id="RHEA-COMP:10700"/>
        <dbReference type="ChEBI" id="CHEBI:15378"/>
        <dbReference type="ChEBI" id="CHEBI:17359"/>
        <dbReference type="ChEBI" id="CHEBI:29950"/>
        <dbReference type="ChEBI" id="CHEBI:50058"/>
        <dbReference type="ChEBI" id="CHEBI:58339"/>
        <dbReference type="ChEBI" id="CHEBI:58343"/>
        <dbReference type="EC" id="1.8.4.8"/>
    </reaction>
</comment>
<comment type="pathway">
    <text evidence="1">Sulfur metabolism; hydrogen sulfide biosynthesis; sulfite from sulfate: step 3/3.</text>
</comment>
<comment type="subcellular location">
    <subcellularLocation>
        <location evidence="1">Cytoplasm</location>
    </subcellularLocation>
</comment>
<comment type="similarity">
    <text evidence="1">Belongs to the PAPS reductase family. CysH subfamily.</text>
</comment>
<keyword id="KW-0963">Cytoplasm</keyword>
<keyword id="KW-0560">Oxidoreductase</keyword>
<accession>B5F429</accession>
<reference key="1">
    <citation type="journal article" date="2011" name="J. Bacteriol.">
        <title>Comparative genomics of 28 Salmonella enterica isolates: evidence for CRISPR-mediated adaptive sublineage evolution.</title>
        <authorList>
            <person name="Fricke W.F."/>
            <person name="Mammel M.K."/>
            <person name="McDermott P.F."/>
            <person name="Tartera C."/>
            <person name="White D.G."/>
            <person name="Leclerc J.E."/>
            <person name="Ravel J."/>
            <person name="Cebula T.A."/>
        </authorList>
    </citation>
    <scope>NUCLEOTIDE SEQUENCE [LARGE SCALE GENOMIC DNA]</scope>
    <source>
        <strain>SL483</strain>
    </source>
</reference>
<name>CYSH_SALA4</name>